<reference key="1">
    <citation type="journal article" date="2009" name="PLoS Genet.">
        <title>Organised genome dynamics in the Escherichia coli species results in highly diverse adaptive paths.</title>
        <authorList>
            <person name="Touchon M."/>
            <person name="Hoede C."/>
            <person name="Tenaillon O."/>
            <person name="Barbe V."/>
            <person name="Baeriswyl S."/>
            <person name="Bidet P."/>
            <person name="Bingen E."/>
            <person name="Bonacorsi S."/>
            <person name="Bouchier C."/>
            <person name="Bouvet O."/>
            <person name="Calteau A."/>
            <person name="Chiapello H."/>
            <person name="Clermont O."/>
            <person name="Cruveiller S."/>
            <person name="Danchin A."/>
            <person name="Diard M."/>
            <person name="Dossat C."/>
            <person name="Karoui M.E."/>
            <person name="Frapy E."/>
            <person name="Garry L."/>
            <person name="Ghigo J.M."/>
            <person name="Gilles A.M."/>
            <person name="Johnson J."/>
            <person name="Le Bouguenec C."/>
            <person name="Lescat M."/>
            <person name="Mangenot S."/>
            <person name="Martinez-Jehanne V."/>
            <person name="Matic I."/>
            <person name="Nassif X."/>
            <person name="Oztas S."/>
            <person name="Petit M.A."/>
            <person name="Pichon C."/>
            <person name="Rouy Z."/>
            <person name="Ruf C.S."/>
            <person name="Schneider D."/>
            <person name="Tourret J."/>
            <person name="Vacherie B."/>
            <person name="Vallenet D."/>
            <person name="Medigue C."/>
            <person name="Rocha E.P.C."/>
            <person name="Denamur E."/>
        </authorList>
    </citation>
    <scope>NUCLEOTIDE SEQUENCE [LARGE SCALE GENOMIC DNA]</scope>
    <source>
        <strain>ATCC 35469 / DSM 13698 / BCRC 15582 / CCUG 18766 / IAM 14443 / JCM 21226 / LMG 7866 / NBRC 102419 / NCTC 12128 / CDC 0568-73</strain>
    </source>
</reference>
<name>WECG_ESCF3</name>
<sequence>MNNNTTAPTYTLRGLQLIGWRDMQHALDYLFADGQLKQGTLVAINAEKMLTIEDNAEVRALINAAEFKYADGISVVRSVRKKYPQAQVSRVAGADLWEELMARAGKEGTPVFLVGGKPEVLAQTEAKLRNQWNVNIVGSQDGYFKPEQRQALFERIHASGAQIVTVAMGSPKQEIFMRDCRLVHPDALYMGVGGTYDVFTGHVKRAPKIWQTLGLEWLYRLLSQPSRIKRQLRLLRYLRWHYTGNL</sequence>
<protein>
    <recommendedName>
        <fullName evidence="1">UDP-N-acetyl-D-mannosaminuronic acid transferase</fullName>
        <shortName evidence="1">UDP-ManNAcA transferase</shortName>
        <ecNumber evidence="1">2.4.1.180</ecNumber>
    </recommendedName>
</protein>
<organism>
    <name type="scientific">Escherichia fergusonii (strain ATCC 35469 / DSM 13698 / CCUG 18766 / IAM 14443 / JCM 21226 / LMG 7866 / NBRC 102419 / NCTC 12128 / CDC 0568-73)</name>
    <dbReference type="NCBI Taxonomy" id="585054"/>
    <lineage>
        <taxon>Bacteria</taxon>
        <taxon>Pseudomonadati</taxon>
        <taxon>Pseudomonadota</taxon>
        <taxon>Gammaproteobacteria</taxon>
        <taxon>Enterobacterales</taxon>
        <taxon>Enterobacteriaceae</taxon>
        <taxon>Escherichia</taxon>
    </lineage>
</organism>
<proteinExistence type="inferred from homology"/>
<dbReference type="EC" id="2.4.1.180" evidence="1"/>
<dbReference type="EMBL" id="CU928158">
    <property type="protein sequence ID" value="CAQ91169.1"/>
    <property type="molecule type" value="Genomic_DNA"/>
</dbReference>
<dbReference type="RefSeq" id="WP_001064029.1">
    <property type="nucleotide sequence ID" value="NC_011740.1"/>
</dbReference>
<dbReference type="SMR" id="B7LU61"/>
<dbReference type="CAZy" id="GT26">
    <property type="family name" value="Glycosyltransferase Family 26"/>
</dbReference>
<dbReference type="GeneID" id="75059687"/>
<dbReference type="KEGG" id="efe:EFER_3709"/>
<dbReference type="HOGENOM" id="CLU_063203_3_2_6"/>
<dbReference type="OrthoDB" id="9808602at2"/>
<dbReference type="UniPathway" id="UPA00566"/>
<dbReference type="Proteomes" id="UP000000745">
    <property type="component" value="Chromosome"/>
</dbReference>
<dbReference type="GO" id="GO:0047241">
    <property type="term" value="F:lipopolysaccharide N-acetylmannosaminouronosyltransferase activity"/>
    <property type="evidence" value="ECO:0007669"/>
    <property type="project" value="UniProtKB-UniRule"/>
</dbReference>
<dbReference type="GO" id="GO:0009246">
    <property type="term" value="P:enterobacterial common antigen biosynthetic process"/>
    <property type="evidence" value="ECO:0007669"/>
    <property type="project" value="UniProtKB-UniRule"/>
</dbReference>
<dbReference type="CDD" id="cd06533">
    <property type="entry name" value="Glyco_transf_WecG_TagA"/>
    <property type="match status" value="1"/>
</dbReference>
<dbReference type="HAMAP" id="MF_01001">
    <property type="entry name" value="WecG_RffM"/>
    <property type="match status" value="1"/>
</dbReference>
<dbReference type="InterPro" id="IPR023085">
    <property type="entry name" value="UDP-ManNAcA_Trfase_WecG"/>
</dbReference>
<dbReference type="InterPro" id="IPR004629">
    <property type="entry name" value="WecG_TagA_CpsF"/>
</dbReference>
<dbReference type="NCBIfam" id="NF002980">
    <property type="entry name" value="PRK03692.1"/>
    <property type="match status" value="1"/>
</dbReference>
<dbReference type="NCBIfam" id="TIGR00696">
    <property type="entry name" value="wecG_tagA_cpsF"/>
    <property type="match status" value="1"/>
</dbReference>
<dbReference type="PANTHER" id="PTHR34136">
    <property type="match status" value="1"/>
</dbReference>
<dbReference type="PANTHER" id="PTHR34136:SF1">
    <property type="entry name" value="UDP-N-ACETYL-D-MANNOSAMINURONIC ACID TRANSFERASE"/>
    <property type="match status" value="1"/>
</dbReference>
<dbReference type="Pfam" id="PF03808">
    <property type="entry name" value="Glyco_tran_WecG"/>
    <property type="match status" value="1"/>
</dbReference>
<comment type="function">
    <text evidence="1">Catalyzes the synthesis of Und-PP-GlcNAc-ManNAcA (Lipid II), the second lipid-linked intermediate involved in enterobacterial common antigen (ECA) synthesis.</text>
</comment>
<comment type="catalytic activity">
    <reaction evidence="1">
        <text>UDP-N-acetyl-alpha-D-mannosaminouronate + N-acetyl-alpha-D-glucosaminyl-di-trans,octa-cis-undecaprenyl diphosphate = beta-D-ManNAcA-(1-&gt;4)-alpha-D-GlcNAc-di-trans,octa-cis-undecaprenyl diphosphate + UDP + H(+)</text>
        <dbReference type="Rhea" id="RHEA:28366"/>
        <dbReference type="ChEBI" id="CHEBI:15378"/>
        <dbReference type="ChEBI" id="CHEBI:58223"/>
        <dbReference type="ChEBI" id="CHEBI:61495"/>
        <dbReference type="ChEBI" id="CHEBI:62959"/>
        <dbReference type="ChEBI" id="CHEBI:70731"/>
        <dbReference type="EC" id="2.4.1.180"/>
    </reaction>
</comment>
<comment type="pathway">
    <text evidence="1">Bacterial outer membrane biogenesis; enterobacterial common antigen biosynthesis.</text>
</comment>
<comment type="similarity">
    <text evidence="1">Belongs to the glycosyltransferase 26 family.</text>
</comment>
<keyword id="KW-0328">Glycosyltransferase</keyword>
<keyword id="KW-0808">Transferase</keyword>
<evidence type="ECO:0000255" key="1">
    <source>
        <dbReference type="HAMAP-Rule" id="MF_01001"/>
    </source>
</evidence>
<accession>B7LU61</accession>
<feature type="chain" id="PRO_1000134579" description="UDP-N-acetyl-D-mannosaminuronic acid transferase">
    <location>
        <begin position="1"/>
        <end position="246"/>
    </location>
</feature>
<gene>
    <name evidence="1" type="primary">wecG</name>
    <name evidence="1" type="synonym">rffM</name>
    <name type="ordered locus">EFER_3709</name>
</gene>